<accession>Q3M502</accession>
<proteinExistence type="inferred from homology"/>
<keyword id="KW-0030">Aminoacyl-tRNA synthetase</keyword>
<keyword id="KW-0067">ATP-binding</keyword>
<keyword id="KW-0963">Cytoplasm</keyword>
<keyword id="KW-0436">Ligase</keyword>
<keyword id="KW-0547">Nucleotide-binding</keyword>
<keyword id="KW-0648">Protein biosynthesis</keyword>
<evidence type="ECO:0000255" key="1">
    <source>
        <dbReference type="HAMAP-Rule" id="MF_00254"/>
    </source>
</evidence>
<name>SYGA_TRIV2</name>
<gene>
    <name evidence="1" type="primary">glyQ</name>
    <name type="ordered locus">Ava_4336</name>
</gene>
<protein>
    <recommendedName>
        <fullName evidence="1">Glycine--tRNA ligase alpha subunit</fullName>
        <ecNumber evidence="1">6.1.1.14</ecNumber>
    </recommendedName>
    <alternativeName>
        <fullName evidence="1">Glycyl-tRNA synthetase alpha subunit</fullName>
        <shortName evidence="1">GlyRS</shortName>
    </alternativeName>
</protein>
<comment type="catalytic activity">
    <reaction evidence="1">
        <text>tRNA(Gly) + glycine + ATP = glycyl-tRNA(Gly) + AMP + diphosphate</text>
        <dbReference type="Rhea" id="RHEA:16013"/>
        <dbReference type="Rhea" id="RHEA-COMP:9664"/>
        <dbReference type="Rhea" id="RHEA-COMP:9683"/>
        <dbReference type="ChEBI" id="CHEBI:30616"/>
        <dbReference type="ChEBI" id="CHEBI:33019"/>
        <dbReference type="ChEBI" id="CHEBI:57305"/>
        <dbReference type="ChEBI" id="CHEBI:78442"/>
        <dbReference type="ChEBI" id="CHEBI:78522"/>
        <dbReference type="ChEBI" id="CHEBI:456215"/>
        <dbReference type="EC" id="6.1.1.14"/>
    </reaction>
</comment>
<comment type="subunit">
    <text evidence="1">Tetramer of two alpha and two beta subunits.</text>
</comment>
<comment type="subcellular location">
    <subcellularLocation>
        <location evidence="1">Cytoplasm</location>
    </subcellularLocation>
</comment>
<comment type="similarity">
    <text evidence="1">Belongs to the class-II aminoacyl-tRNA synthetase family.</text>
</comment>
<sequence>MNFQSVIATLHQFWAERGCLIAQPYDIEKGAGTKNPHTFLRALGPEPWAVAYVEPCRRPTDGRYGENPNRVQHYYQYQVLIKPSPDNIQDIYLDSLRALGIRPEDHDIRFVEDNWEDATVGAWGTGWEVWLDGMEITQFTYFQQCGGIDCRPVSIEITYGLERLAMYLQEVEAITKIHWTDDITYGDVFLQNEIEQSTYNFEASNPELLLTLFSLYEQEATQLTEKGLVLPSLDYVMKCSHTFNLLDARGVISVTERTRYIARIRHLARKVANLYVEQREKLGFPLLKNVPVAQ</sequence>
<organism>
    <name type="scientific">Trichormus variabilis (strain ATCC 29413 / PCC 7937)</name>
    <name type="common">Anabaena variabilis</name>
    <dbReference type="NCBI Taxonomy" id="240292"/>
    <lineage>
        <taxon>Bacteria</taxon>
        <taxon>Bacillati</taxon>
        <taxon>Cyanobacteriota</taxon>
        <taxon>Cyanophyceae</taxon>
        <taxon>Nostocales</taxon>
        <taxon>Nostocaceae</taxon>
        <taxon>Trichormus</taxon>
    </lineage>
</organism>
<dbReference type="EC" id="6.1.1.14" evidence="1"/>
<dbReference type="EMBL" id="CP000117">
    <property type="protein sequence ID" value="ABA23934.1"/>
    <property type="molecule type" value="Genomic_DNA"/>
</dbReference>
<dbReference type="SMR" id="Q3M502"/>
<dbReference type="STRING" id="240292.Ava_4336"/>
<dbReference type="KEGG" id="ava:Ava_4336"/>
<dbReference type="eggNOG" id="COG0752">
    <property type="taxonomic scope" value="Bacteria"/>
</dbReference>
<dbReference type="HOGENOM" id="CLU_057066_1_0_3"/>
<dbReference type="Proteomes" id="UP000002533">
    <property type="component" value="Chromosome"/>
</dbReference>
<dbReference type="GO" id="GO:0005829">
    <property type="term" value="C:cytosol"/>
    <property type="evidence" value="ECO:0007669"/>
    <property type="project" value="TreeGrafter"/>
</dbReference>
<dbReference type="GO" id="GO:0005524">
    <property type="term" value="F:ATP binding"/>
    <property type="evidence" value="ECO:0007669"/>
    <property type="project" value="UniProtKB-UniRule"/>
</dbReference>
<dbReference type="GO" id="GO:0004820">
    <property type="term" value="F:glycine-tRNA ligase activity"/>
    <property type="evidence" value="ECO:0007669"/>
    <property type="project" value="UniProtKB-UniRule"/>
</dbReference>
<dbReference type="GO" id="GO:0006426">
    <property type="term" value="P:glycyl-tRNA aminoacylation"/>
    <property type="evidence" value="ECO:0007669"/>
    <property type="project" value="UniProtKB-UniRule"/>
</dbReference>
<dbReference type="CDD" id="cd00733">
    <property type="entry name" value="GlyRS_alpha_core"/>
    <property type="match status" value="1"/>
</dbReference>
<dbReference type="FunFam" id="3.30.930.10:FF:000006">
    <property type="entry name" value="Glycine--tRNA ligase alpha subunit"/>
    <property type="match status" value="1"/>
</dbReference>
<dbReference type="Gene3D" id="3.30.930.10">
    <property type="entry name" value="Bira Bifunctional Protein, Domain 2"/>
    <property type="match status" value="1"/>
</dbReference>
<dbReference type="Gene3D" id="1.20.58.180">
    <property type="entry name" value="Class II aaRS and biotin synthetases, domain 2"/>
    <property type="match status" value="1"/>
</dbReference>
<dbReference type="HAMAP" id="MF_00254">
    <property type="entry name" value="Gly_tRNA_synth_alpha"/>
    <property type="match status" value="1"/>
</dbReference>
<dbReference type="InterPro" id="IPR045864">
    <property type="entry name" value="aa-tRNA-synth_II/BPL/LPL"/>
</dbReference>
<dbReference type="InterPro" id="IPR006194">
    <property type="entry name" value="Gly-tRNA-synth_heterodimer"/>
</dbReference>
<dbReference type="InterPro" id="IPR002310">
    <property type="entry name" value="Gly-tRNA_ligase_asu"/>
</dbReference>
<dbReference type="NCBIfam" id="TIGR00388">
    <property type="entry name" value="glyQ"/>
    <property type="match status" value="1"/>
</dbReference>
<dbReference type="NCBIfam" id="NF006827">
    <property type="entry name" value="PRK09348.1"/>
    <property type="match status" value="1"/>
</dbReference>
<dbReference type="PANTHER" id="PTHR30075:SF2">
    <property type="entry name" value="GLYCINE--TRNA LIGASE, CHLOROPLASTIC_MITOCHONDRIAL 2"/>
    <property type="match status" value="1"/>
</dbReference>
<dbReference type="PANTHER" id="PTHR30075">
    <property type="entry name" value="GLYCYL-TRNA SYNTHETASE"/>
    <property type="match status" value="1"/>
</dbReference>
<dbReference type="Pfam" id="PF02091">
    <property type="entry name" value="tRNA-synt_2e"/>
    <property type="match status" value="1"/>
</dbReference>
<dbReference type="PRINTS" id="PR01044">
    <property type="entry name" value="TRNASYNTHGA"/>
</dbReference>
<dbReference type="SUPFAM" id="SSF55681">
    <property type="entry name" value="Class II aaRS and biotin synthetases"/>
    <property type="match status" value="1"/>
</dbReference>
<dbReference type="PROSITE" id="PS50861">
    <property type="entry name" value="AA_TRNA_LIGASE_II_GLYAB"/>
    <property type="match status" value="1"/>
</dbReference>
<reference key="1">
    <citation type="journal article" date="2014" name="Stand. Genomic Sci.">
        <title>Complete genome sequence of Anabaena variabilis ATCC 29413.</title>
        <authorList>
            <person name="Thiel T."/>
            <person name="Pratte B.S."/>
            <person name="Zhong J."/>
            <person name="Goodwin L."/>
            <person name="Copeland A."/>
            <person name="Lucas S."/>
            <person name="Han C."/>
            <person name="Pitluck S."/>
            <person name="Land M.L."/>
            <person name="Kyrpides N.C."/>
            <person name="Woyke T."/>
        </authorList>
    </citation>
    <scope>NUCLEOTIDE SEQUENCE [LARGE SCALE GENOMIC DNA]</scope>
    <source>
        <strain>ATCC 29413 / PCC 7937</strain>
    </source>
</reference>
<feature type="chain" id="PRO_1000047396" description="Glycine--tRNA ligase alpha subunit">
    <location>
        <begin position="1"/>
        <end position="294"/>
    </location>
</feature>